<protein>
    <recommendedName>
        <fullName>Ubiquitin-like protein 4A</fullName>
    </recommendedName>
</protein>
<proteinExistence type="evidence at transcript level"/>
<feature type="chain" id="PRO_0000403748" description="Ubiquitin-like protein 4A">
    <location>
        <begin position="1"/>
        <end position="148"/>
    </location>
</feature>
<feature type="domain" description="Ubiquitin-like" evidence="2">
    <location>
        <begin position="1"/>
        <end position="76"/>
    </location>
</feature>
<evidence type="ECO:0000250" key="1">
    <source>
        <dbReference type="UniProtKB" id="P11441"/>
    </source>
</evidence>
<evidence type="ECO:0000255" key="2">
    <source>
        <dbReference type="PROSITE-ProRule" id="PRU00214"/>
    </source>
</evidence>
<keyword id="KW-0963">Cytoplasm</keyword>
<keyword id="KW-0539">Nucleus</keyword>
<keyword id="KW-1185">Reference proteome</keyword>
<keyword id="KW-0813">Transport</keyword>
<sequence length="148" mass="16590">MQLTVKALKGKEAHIQVSEGDTVLAVKRLVEEKLQVPVSQQRLLFRGKSLADEHCLSHYSIGPGSRLNLMVKDQVAPEGHSGNNTAWKSLSVILRKHFSPADAERVLEYVQKDYERSLSLLSLDDIERLATRILHPQYSEAADLGFLD</sequence>
<organism>
    <name type="scientific">Xenopus laevis</name>
    <name type="common">African clawed frog</name>
    <dbReference type="NCBI Taxonomy" id="8355"/>
    <lineage>
        <taxon>Eukaryota</taxon>
        <taxon>Metazoa</taxon>
        <taxon>Chordata</taxon>
        <taxon>Craniata</taxon>
        <taxon>Vertebrata</taxon>
        <taxon>Euteleostomi</taxon>
        <taxon>Amphibia</taxon>
        <taxon>Batrachia</taxon>
        <taxon>Anura</taxon>
        <taxon>Pipoidea</taxon>
        <taxon>Pipidae</taxon>
        <taxon>Xenopodinae</taxon>
        <taxon>Xenopus</taxon>
        <taxon>Xenopus</taxon>
    </lineage>
</organism>
<accession>Q0D261</accession>
<accession>A7YT11</accession>
<accession>Q52KN4</accession>
<comment type="function">
    <text evidence="1">As part of a cytosolic protein quality control complex, the bag6/bat3 complex, maintains misfolded and hydrophobic patches-containing proteins in a soluble state and participates in their proper delivery to the endoplasmic reticulum or alternatively can promote their sorting to the proteasome where they undergo degradation. The bag6/bat3 complex is involved in the post-translational delivery of tail-anchored/type II transmembrane proteins to the endoplasmic reticulum membrane. Similarly, the bag6/bat3 complex also functions as a sorting platform for proteins of the secretory pathway that are mislocalized to the cytosol either delivering them to the proteasome for degradation or to the endoplasmic reticulum. The bag6/bat3 complex also plays a role in the endoplasmic reticulum-associated degradation (ERAD), a quality control mechanism that eliminates unwanted proteins of the endoplasmic reticulum through their retrotranslocation to the cytosol and their targeting to the proteasome. It maintains these retrotranslocated proteins in an unfolded yet soluble state condition in the cytosol to ensure their proper delivery to the proteasome.</text>
</comment>
<comment type="subunit">
    <text evidence="1">Component of the bag6/bat3 complex.</text>
</comment>
<comment type="subcellular location">
    <subcellularLocation>
        <location evidence="1">Cytoplasm</location>
        <location evidence="1">Cytosol</location>
    </subcellularLocation>
    <subcellularLocation>
        <location evidence="1">Nucleus</location>
    </subcellularLocation>
</comment>
<reference key="1">
    <citation type="submission" date="2006-08" db="EMBL/GenBank/DDBJ databases">
        <authorList>
            <consortium name="NIH - Xenopus Gene Collection (XGC) project"/>
        </authorList>
    </citation>
    <scope>NUCLEOTIDE SEQUENCE [LARGE SCALE MRNA]</scope>
    <source>
        <tissue>Embryo</tissue>
        <tissue>Eye</tissue>
        <tissue>Fat body</tissue>
    </source>
</reference>
<gene>
    <name type="primary">ubl4a</name>
</gene>
<dbReference type="EMBL" id="BC094264">
    <property type="protein sequence ID" value="AAH94264.1"/>
    <property type="molecule type" value="mRNA"/>
</dbReference>
<dbReference type="EMBL" id="BC115000">
    <property type="protein sequence ID" value="AAI15001.1"/>
    <property type="molecule type" value="mRNA"/>
</dbReference>
<dbReference type="EMBL" id="BC122490">
    <property type="protein sequence ID" value="AAI22491.1"/>
    <property type="molecule type" value="mRNA"/>
</dbReference>
<dbReference type="SMR" id="Q0D261"/>
<dbReference type="Xenbase" id="XB-GENE-6253458">
    <property type="gene designation" value="ubl4a.S"/>
</dbReference>
<dbReference type="OrthoDB" id="417450at2759"/>
<dbReference type="Proteomes" id="UP000186698">
    <property type="component" value="Unplaced"/>
</dbReference>
<dbReference type="GO" id="GO:0071818">
    <property type="term" value="C:BAT3 complex"/>
    <property type="evidence" value="ECO:0000250"/>
    <property type="project" value="UniProtKB"/>
</dbReference>
<dbReference type="GO" id="GO:0005829">
    <property type="term" value="C:cytosol"/>
    <property type="evidence" value="ECO:0000250"/>
    <property type="project" value="UniProtKB"/>
</dbReference>
<dbReference type="GO" id="GO:0005634">
    <property type="term" value="C:nucleus"/>
    <property type="evidence" value="ECO:0007669"/>
    <property type="project" value="UniProtKB-SubCell"/>
</dbReference>
<dbReference type="GO" id="GO:0051087">
    <property type="term" value="F:protein-folding chaperone binding"/>
    <property type="evidence" value="ECO:0000318"/>
    <property type="project" value="GO_Central"/>
</dbReference>
<dbReference type="GO" id="GO:0006620">
    <property type="term" value="P:post-translational protein targeting to endoplasmic reticulum membrane"/>
    <property type="evidence" value="ECO:0000318"/>
    <property type="project" value="GO_Central"/>
</dbReference>
<dbReference type="GO" id="GO:0071816">
    <property type="term" value="P:tail-anchored membrane protein insertion into ER membrane"/>
    <property type="evidence" value="ECO:0000250"/>
    <property type="project" value="UniProtKB"/>
</dbReference>
<dbReference type="CDD" id="cd01807">
    <property type="entry name" value="Ubl_UBL4A_like"/>
    <property type="match status" value="1"/>
</dbReference>
<dbReference type="FunFam" id="3.10.20.90:FF:000144">
    <property type="entry name" value="Ubiquitin-like protein 4A"/>
    <property type="match status" value="1"/>
</dbReference>
<dbReference type="Gene3D" id="3.10.20.90">
    <property type="entry name" value="Phosphatidylinositol 3-kinase Catalytic Subunit, Chain A, domain 1"/>
    <property type="match status" value="1"/>
</dbReference>
<dbReference type="InterPro" id="IPR000626">
    <property type="entry name" value="Ubiquitin-like_dom"/>
</dbReference>
<dbReference type="InterPro" id="IPR029071">
    <property type="entry name" value="Ubiquitin-like_domsf"/>
</dbReference>
<dbReference type="InterPro" id="IPR019954">
    <property type="entry name" value="Ubiquitin_CS"/>
</dbReference>
<dbReference type="InterPro" id="IPR019956">
    <property type="entry name" value="Ubiquitin_dom"/>
</dbReference>
<dbReference type="InterPro" id="IPR041421">
    <property type="entry name" value="Ubl4_C_TUGS"/>
</dbReference>
<dbReference type="InterPro" id="IPR047154">
    <property type="entry name" value="UBL4A-like"/>
</dbReference>
<dbReference type="InterPro" id="IPR044724">
    <property type="entry name" value="Ubl_UBL4A-like"/>
</dbReference>
<dbReference type="PANTHER" id="PTHR46555">
    <property type="entry name" value="UBIQUITIN-LIKE PROTEIN 4A"/>
    <property type="match status" value="1"/>
</dbReference>
<dbReference type="PANTHER" id="PTHR46555:SF1">
    <property type="entry name" value="UBIQUITIN-LIKE PROTEIN 4A"/>
    <property type="match status" value="1"/>
</dbReference>
<dbReference type="Pfam" id="PF17840">
    <property type="entry name" value="Tugs"/>
    <property type="match status" value="1"/>
</dbReference>
<dbReference type="Pfam" id="PF00240">
    <property type="entry name" value="ubiquitin"/>
    <property type="match status" value="1"/>
</dbReference>
<dbReference type="PRINTS" id="PR00348">
    <property type="entry name" value="UBIQUITIN"/>
</dbReference>
<dbReference type="SMART" id="SM00213">
    <property type="entry name" value="UBQ"/>
    <property type="match status" value="1"/>
</dbReference>
<dbReference type="SUPFAM" id="SSF54236">
    <property type="entry name" value="Ubiquitin-like"/>
    <property type="match status" value="1"/>
</dbReference>
<dbReference type="PROSITE" id="PS00299">
    <property type="entry name" value="UBIQUITIN_1"/>
    <property type="match status" value="1"/>
</dbReference>
<dbReference type="PROSITE" id="PS50053">
    <property type="entry name" value="UBIQUITIN_2"/>
    <property type="match status" value="1"/>
</dbReference>
<name>UBL4A_XENLA</name>